<keyword id="KW-0233">DNA recombination</keyword>
<keyword id="KW-0238">DNA-binding</keyword>
<keyword id="KW-0804">Transcription</keyword>
<keyword id="KW-0805">Transcription regulation</keyword>
<keyword id="KW-0810">Translation regulation</keyword>
<feature type="chain" id="PRO_1000072174" description="Integration host factor subunit alpha">
    <location>
        <begin position="1"/>
        <end position="98"/>
    </location>
</feature>
<feature type="region of interest" description="Disordered" evidence="2">
    <location>
        <begin position="51"/>
        <end position="71"/>
    </location>
</feature>
<feature type="compositionally biased region" description="Basic and acidic residues" evidence="2">
    <location>
        <begin position="53"/>
        <end position="69"/>
    </location>
</feature>
<protein>
    <recommendedName>
        <fullName evidence="1">Integration host factor subunit alpha</fullName>
        <shortName evidence="1">IHF-alpha</shortName>
    </recommendedName>
</protein>
<sequence>MALTKAELAEALFEQLGMSKRDAKDTVEVFFEEIRKALESGEQVKLSGFGNFDLRDKNERPGRNPKTGEDIPITARRVVTFRPGQKLKARVENIKVEK</sequence>
<accession>A5F1W7</accession>
<accession>C3LZY3</accession>
<gene>
    <name evidence="1" type="primary">ihfA</name>
    <name evidence="1" type="synonym">himA</name>
    <name type="ordered locus">VC0395_A0846</name>
    <name type="ordered locus">VC395_1341</name>
</gene>
<dbReference type="EMBL" id="CP000627">
    <property type="protein sequence ID" value="ABQ19858.1"/>
    <property type="molecule type" value="Genomic_DNA"/>
</dbReference>
<dbReference type="EMBL" id="CP001235">
    <property type="protein sequence ID" value="ACP09349.1"/>
    <property type="molecule type" value="Genomic_DNA"/>
</dbReference>
<dbReference type="RefSeq" id="WP_001229260.1">
    <property type="nucleotide sequence ID" value="NZ_JAACZH010000002.1"/>
</dbReference>
<dbReference type="SMR" id="A5F1W7"/>
<dbReference type="GeneID" id="88785345"/>
<dbReference type="KEGG" id="vco:VC0395_A0846"/>
<dbReference type="KEGG" id="vcr:VC395_1341"/>
<dbReference type="PATRIC" id="fig|345073.21.peg.1305"/>
<dbReference type="eggNOG" id="COG0776">
    <property type="taxonomic scope" value="Bacteria"/>
</dbReference>
<dbReference type="HOGENOM" id="CLU_105066_1_3_6"/>
<dbReference type="OrthoDB" id="9797747at2"/>
<dbReference type="Proteomes" id="UP000000249">
    <property type="component" value="Chromosome 2"/>
</dbReference>
<dbReference type="CollecTF" id="EXPREG_00000230"/>
<dbReference type="GO" id="GO:0005829">
    <property type="term" value="C:cytosol"/>
    <property type="evidence" value="ECO:0007669"/>
    <property type="project" value="TreeGrafter"/>
</dbReference>
<dbReference type="GO" id="GO:0032993">
    <property type="term" value="C:protein-DNA complex"/>
    <property type="evidence" value="ECO:0000353"/>
    <property type="project" value="CollecTF"/>
</dbReference>
<dbReference type="GO" id="GO:0001216">
    <property type="term" value="F:DNA-binding transcription activator activity"/>
    <property type="evidence" value="ECO:0000353"/>
    <property type="project" value="CollecTF"/>
</dbReference>
<dbReference type="GO" id="GO:0030527">
    <property type="term" value="F:structural constituent of chromatin"/>
    <property type="evidence" value="ECO:0007669"/>
    <property type="project" value="InterPro"/>
</dbReference>
<dbReference type="GO" id="GO:0000976">
    <property type="term" value="F:transcription cis-regulatory region binding"/>
    <property type="evidence" value="ECO:0000353"/>
    <property type="project" value="CollecTF"/>
</dbReference>
<dbReference type="GO" id="GO:0006310">
    <property type="term" value="P:DNA recombination"/>
    <property type="evidence" value="ECO:0007669"/>
    <property type="project" value="UniProtKB-UniRule"/>
</dbReference>
<dbReference type="GO" id="GO:0006417">
    <property type="term" value="P:regulation of translation"/>
    <property type="evidence" value="ECO:0007669"/>
    <property type="project" value="UniProtKB-UniRule"/>
</dbReference>
<dbReference type="CDD" id="cd13835">
    <property type="entry name" value="IHF_A"/>
    <property type="match status" value="1"/>
</dbReference>
<dbReference type="FunFam" id="4.10.520.10:FF:000002">
    <property type="entry name" value="Integration host factor subunit alpha"/>
    <property type="match status" value="1"/>
</dbReference>
<dbReference type="Gene3D" id="4.10.520.10">
    <property type="entry name" value="IHF-like DNA-binding proteins"/>
    <property type="match status" value="1"/>
</dbReference>
<dbReference type="HAMAP" id="MF_00380">
    <property type="entry name" value="IHF_alpha"/>
    <property type="match status" value="1"/>
</dbReference>
<dbReference type="InterPro" id="IPR000119">
    <property type="entry name" value="Hist_DNA-bd"/>
</dbReference>
<dbReference type="InterPro" id="IPR020816">
    <property type="entry name" value="Histone-like_DNA-bd_CS"/>
</dbReference>
<dbReference type="InterPro" id="IPR010992">
    <property type="entry name" value="IHF-like_DNA-bd_dom_sf"/>
</dbReference>
<dbReference type="InterPro" id="IPR005684">
    <property type="entry name" value="IHF_alpha"/>
</dbReference>
<dbReference type="NCBIfam" id="TIGR00987">
    <property type="entry name" value="himA"/>
    <property type="match status" value="1"/>
</dbReference>
<dbReference type="NCBIfam" id="NF001401">
    <property type="entry name" value="PRK00285.1"/>
    <property type="match status" value="1"/>
</dbReference>
<dbReference type="PANTHER" id="PTHR33175">
    <property type="entry name" value="DNA-BINDING PROTEIN HU"/>
    <property type="match status" value="1"/>
</dbReference>
<dbReference type="PANTHER" id="PTHR33175:SF2">
    <property type="entry name" value="INTEGRATION HOST FACTOR SUBUNIT ALPHA"/>
    <property type="match status" value="1"/>
</dbReference>
<dbReference type="Pfam" id="PF00216">
    <property type="entry name" value="Bac_DNA_binding"/>
    <property type="match status" value="1"/>
</dbReference>
<dbReference type="PRINTS" id="PR01727">
    <property type="entry name" value="DNABINDINGHU"/>
</dbReference>
<dbReference type="SMART" id="SM00411">
    <property type="entry name" value="BHL"/>
    <property type="match status" value="1"/>
</dbReference>
<dbReference type="SUPFAM" id="SSF47729">
    <property type="entry name" value="IHF-like DNA-binding proteins"/>
    <property type="match status" value="1"/>
</dbReference>
<dbReference type="PROSITE" id="PS00045">
    <property type="entry name" value="HISTONE_LIKE"/>
    <property type="match status" value="1"/>
</dbReference>
<comment type="function">
    <text evidence="1">This protein is one of the two subunits of integration host factor, a specific DNA-binding protein that functions in genetic recombination as well as in transcriptional and translational control.</text>
</comment>
<comment type="subunit">
    <text evidence="1">Heterodimer of an alpha and a beta chain.</text>
</comment>
<comment type="similarity">
    <text evidence="1">Belongs to the bacterial histone-like protein family.</text>
</comment>
<name>IHFA_VIBC3</name>
<reference key="1">
    <citation type="submission" date="2007-03" db="EMBL/GenBank/DDBJ databases">
        <authorList>
            <person name="Heidelberg J."/>
        </authorList>
    </citation>
    <scope>NUCLEOTIDE SEQUENCE [LARGE SCALE GENOMIC DNA]</scope>
    <source>
        <strain>ATCC 39541 / Classical Ogawa 395 / O395</strain>
    </source>
</reference>
<reference key="2">
    <citation type="journal article" date="2008" name="PLoS ONE">
        <title>A recalibrated molecular clock and independent origins for the cholera pandemic clones.</title>
        <authorList>
            <person name="Feng L."/>
            <person name="Reeves P.R."/>
            <person name="Lan R."/>
            <person name="Ren Y."/>
            <person name="Gao C."/>
            <person name="Zhou Z."/>
            <person name="Ren Y."/>
            <person name="Cheng J."/>
            <person name="Wang W."/>
            <person name="Wang J."/>
            <person name="Qian W."/>
            <person name="Li D."/>
            <person name="Wang L."/>
        </authorList>
    </citation>
    <scope>NUCLEOTIDE SEQUENCE [LARGE SCALE GENOMIC DNA]</scope>
    <source>
        <strain>ATCC 39541 / Classical Ogawa 395 / O395</strain>
    </source>
</reference>
<proteinExistence type="inferred from homology"/>
<organism>
    <name type="scientific">Vibrio cholerae serotype O1 (strain ATCC 39541 / Classical Ogawa 395 / O395)</name>
    <dbReference type="NCBI Taxonomy" id="345073"/>
    <lineage>
        <taxon>Bacteria</taxon>
        <taxon>Pseudomonadati</taxon>
        <taxon>Pseudomonadota</taxon>
        <taxon>Gammaproteobacteria</taxon>
        <taxon>Vibrionales</taxon>
        <taxon>Vibrionaceae</taxon>
        <taxon>Vibrio</taxon>
    </lineage>
</organism>
<evidence type="ECO:0000255" key="1">
    <source>
        <dbReference type="HAMAP-Rule" id="MF_00380"/>
    </source>
</evidence>
<evidence type="ECO:0000256" key="2">
    <source>
        <dbReference type="SAM" id="MobiDB-lite"/>
    </source>
</evidence>